<proteinExistence type="inferred from homology"/>
<sequence>MNDQRKGDHAEPTTHFGYQDVPESQKAKKVAEVFHSVAAKYDLMNDVLSGGMHRLWKRFTIELSGVRAGNRVLDIAGGTGDLAAKFSRLVGPTGQVVLADINESMLKVGRDRLLDRGVAGNIEFVQADAEKLPFPDNHFDCVTIAFGLRNVTHKDEAIRSMLRVLKPGGR</sequence>
<organism>
    <name type="scientific">Ectopseudomonas oleovorans</name>
    <name type="common">Pseudomonas oleovorans</name>
    <dbReference type="NCBI Taxonomy" id="301"/>
    <lineage>
        <taxon>Bacteria</taxon>
        <taxon>Pseudomonadati</taxon>
        <taxon>Pseudomonadota</taxon>
        <taxon>Gammaproteobacteria</taxon>
        <taxon>Pseudomonadales</taxon>
        <taxon>Pseudomonadaceae</taxon>
        <taxon>Ectopseudomonas</taxon>
    </lineage>
</organism>
<comment type="function">
    <text evidence="1">Methyltransferase required for the conversion of demethylmenaquinol (DMKH2) to menaquinol (MKH2) and the conversion of 2-polyprenyl-6-methoxy-1,4-benzoquinol (DDMQH2) to 2-polyprenyl-3-methyl-6-methoxy-1,4-benzoquinol (DMQH2).</text>
</comment>
<comment type="catalytic activity">
    <reaction evidence="2">
        <text>a 2-demethylmenaquinol + S-adenosyl-L-methionine = a menaquinol + S-adenosyl-L-homocysteine + H(+)</text>
        <dbReference type="Rhea" id="RHEA:42640"/>
        <dbReference type="Rhea" id="RHEA-COMP:9539"/>
        <dbReference type="Rhea" id="RHEA-COMP:9563"/>
        <dbReference type="ChEBI" id="CHEBI:15378"/>
        <dbReference type="ChEBI" id="CHEBI:18151"/>
        <dbReference type="ChEBI" id="CHEBI:55437"/>
        <dbReference type="ChEBI" id="CHEBI:57856"/>
        <dbReference type="ChEBI" id="CHEBI:59789"/>
        <dbReference type="EC" id="2.1.1.163"/>
    </reaction>
</comment>
<comment type="catalytic activity">
    <reaction evidence="2">
        <text>a 2-methoxy-6-(all-trans-polyprenyl)benzene-1,4-diol + S-adenosyl-L-methionine = a 5-methoxy-2-methyl-3-(all-trans-polyprenyl)benzene-1,4-diol + S-adenosyl-L-homocysteine + H(+)</text>
        <dbReference type="Rhea" id="RHEA:28286"/>
        <dbReference type="Rhea" id="RHEA-COMP:10858"/>
        <dbReference type="Rhea" id="RHEA-COMP:10859"/>
        <dbReference type="ChEBI" id="CHEBI:15378"/>
        <dbReference type="ChEBI" id="CHEBI:57856"/>
        <dbReference type="ChEBI" id="CHEBI:59789"/>
        <dbReference type="ChEBI" id="CHEBI:84166"/>
        <dbReference type="ChEBI" id="CHEBI:84167"/>
        <dbReference type="EC" id="2.1.1.201"/>
    </reaction>
</comment>
<comment type="pathway">
    <text>Quinol/quinone metabolism; menaquinone biosynthesis; menaquinol from 1,4-dihydroxy-2-naphthoate: step 2/2.</text>
</comment>
<comment type="pathway">
    <text>Cofactor biosynthesis; ubiquinone biosynthesis.</text>
</comment>
<comment type="similarity">
    <text>Belongs to the class I-like SAM-binding methyltransferase superfamily. MenG/UbiE family.</text>
</comment>
<name>UBIE_ECTOL</name>
<protein>
    <recommendedName>
        <fullName>Ubiquinone/menaquinone biosynthesis C-methyltransferase UbiE</fullName>
        <ecNumber>2.1.1.163</ecNumber>
        <ecNumber>2.1.1.201</ecNumber>
    </recommendedName>
    <alternativeName>
        <fullName>2-methoxy-6-polyprenyl-1,4-benzoquinol methylase</fullName>
    </alternativeName>
    <alternativeName>
        <fullName>Demethylmenaquinone methyltransferase</fullName>
    </alternativeName>
</protein>
<dbReference type="EC" id="2.1.1.163"/>
<dbReference type="EC" id="2.1.1.201"/>
<dbReference type="EMBL" id="AJ010393">
    <property type="protein sequence ID" value="CAA09105.1"/>
    <property type="molecule type" value="Genomic_DNA"/>
</dbReference>
<dbReference type="SMR" id="Q9Z5E9"/>
<dbReference type="STRING" id="301.SAMN05216280_1002152"/>
<dbReference type="UniPathway" id="UPA00079">
    <property type="reaction ID" value="UER00169"/>
</dbReference>
<dbReference type="UniPathway" id="UPA00232"/>
<dbReference type="GO" id="GO:0008425">
    <property type="term" value="F:2-methoxy-6-polyprenyl-1,4-benzoquinol methyltransferase activity"/>
    <property type="evidence" value="ECO:0007669"/>
    <property type="project" value="UniProtKB-EC"/>
</dbReference>
<dbReference type="GO" id="GO:0043770">
    <property type="term" value="F:demethylmenaquinone methyltransferase activity"/>
    <property type="evidence" value="ECO:0007669"/>
    <property type="project" value="UniProtKB-EC"/>
</dbReference>
<dbReference type="GO" id="GO:0009234">
    <property type="term" value="P:menaquinone biosynthetic process"/>
    <property type="evidence" value="ECO:0007669"/>
    <property type="project" value="UniProtKB-UniPathway"/>
</dbReference>
<dbReference type="GO" id="GO:0032259">
    <property type="term" value="P:methylation"/>
    <property type="evidence" value="ECO:0007669"/>
    <property type="project" value="UniProtKB-KW"/>
</dbReference>
<dbReference type="CDD" id="cd02440">
    <property type="entry name" value="AdoMet_MTases"/>
    <property type="match status" value="1"/>
</dbReference>
<dbReference type="Gene3D" id="3.40.50.150">
    <property type="entry name" value="Vaccinia Virus protein VP39"/>
    <property type="match status" value="1"/>
</dbReference>
<dbReference type="InterPro" id="IPR029063">
    <property type="entry name" value="SAM-dependent_MTases_sf"/>
</dbReference>
<dbReference type="InterPro" id="IPR004033">
    <property type="entry name" value="UbiE/COQ5_MeTrFase"/>
</dbReference>
<dbReference type="InterPro" id="IPR023576">
    <property type="entry name" value="UbiE/COQ5_MeTrFase_CS"/>
</dbReference>
<dbReference type="NCBIfam" id="TIGR01934">
    <property type="entry name" value="MenG_MenH_UbiE"/>
    <property type="match status" value="1"/>
</dbReference>
<dbReference type="PANTHER" id="PTHR43591:SF24">
    <property type="entry name" value="2-METHOXY-6-POLYPRENYL-1,4-BENZOQUINOL METHYLASE, MITOCHONDRIAL"/>
    <property type="match status" value="1"/>
</dbReference>
<dbReference type="PANTHER" id="PTHR43591">
    <property type="entry name" value="METHYLTRANSFERASE"/>
    <property type="match status" value="1"/>
</dbReference>
<dbReference type="Pfam" id="PF01209">
    <property type="entry name" value="Ubie_methyltran"/>
    <property type="match status" value="1"/>
</dbReference>
<dbReference type="SUPFAM" id="SSF53335">
    <property type="entry name" value="S-adenosyl-L-methionine-dependent methyltransferases"/>
    <property type="match status" value="1"/>
</dbReference>
<dbReference type="PROSITE" id="PS51608">
    <property type="entry name" value="SAM_MT_UBIE"/>
    <property type="match status" value="1"/>
</dbReference>
<dbReference type="PROSITE" id="PS01183">
    <property type="entry name" value="UBIE_1"/>
    <property type="match status" value="1"/>
</dbReference>
<accession>Q9Z5E9</accession>
<feature type="chain" id="PRO_0000193310" description="Ubiquinone/menaquinone biosynthesis C-methyltransferase UbiE">
    <location>
        <begin position="1"/>
        <end position="170" status="greater than"/>
    </location>
</feature>
<feature type="region of interest" description="Disordered" evidence="3">
    <location>
        <begin position="1"/>
        <end position="22"/>
    </location>
</feature>
<feature type="compositionally biased region" description="Basic and acidic residues" evidence="3">
    <location>
        <begin position="1"/>
        <end position="12"/>
    </location>
</feature>
<feature type="non-terminal residue">
    <location>
        <position position="170"/>
    </location>
</feature>
<evidence type="ECO:0000250" key="1"/>
<evidence type="ECO:0000255" key="2">
    <source>
        <dbReference type="PROSITE-ProRule" id="PRU00940"/>
    </source>
</evidence>
<evidence type="ECO:0000256" key="3">
    <source>
        <dbReference type="SAM" id="MobiDB-lite"/>
    </source>
</evidence>
<keyword id="KW-0474">Menaquinone biosynthesis</keyword>
<keyword id="KW-0489">Methyltransferase</keyword>
<keyword id="KW-0949">S-adenosyl-L-methionine</keyword>
<keyword id="KW-0808">Transferase</keyword>
<keyword id="KW-0831">Ubiquinone biosynthesis</keyword>
<gene>
    <name type="primary">ubiE</name>
</gene>
<reference key="1">
    <citation type="journal article" date="1999" name="J. Bacteriol.">
        <title>PhaF, a polyhydroxyalkanoate-granule-associated protein of Pseudomonas oleovorans GPo1 involved in the regulatory expression system for pha genes.</title>
        <authorList>
            <person name="Prieto M.A."/>
            <person name="Buehler B."/>
            <person name="Jung K."/>
            <person name="Witholt B."/>
            <person name="Kessler B."/>
        </authorList>
    </citation>
    <scope>NUCLEOTIDE SEQUENCE [GENOMIC DNA]</scope>
    <source>
        <strain>GPo1</strain>
    </source>
</reference>